<keyword id="KW-0328">Glycosyltransferase</keyword>
<keyword id="KW-0808">Transferase</keyword>
<proteinExistence type="evidence at protein level"/>
<gene>
    <name type="primary">5GT7</name>
</gene>
<name>5GT_GENTR</name>
<accession>B2NID7</accession>
<feature type="chain" id="PRO_0000422563" description="Anthocyanidin 3-O-glucoside 5-O-glucosyltransferase">
    <location>
        <begin position="1"/>
        <end position="504"/>
    </location>
</feature>
<feature type="region of interest" description="Disordered" evidence="3">
    <location>
        <begin position="107"/>
        <end position="126"/>
    </location>
</feature>
<feature type="compositionally biased region" description="Gly residues" evidence="3">
    <location>
        <begin position="111"/>
        <end position="125"/>
    </location>
</feature>
<feature type="active site" description="Proton acceptor" evidence="1">
    <location>
        <position position="23"/>
    </location>
</feature>
<feature type="binding site" evidence="2">
    <location>
        <position position="23"/>
    </location>
    <ligand>
        <name>an anthocyanidin</name>
        <dbReference type="ChEBI" id="CHEBI:143576"/>
    </ligand>
</feature>
<feature type="binding site" evidence="1">
    <location>
        <position position="157"/>
    </location>
    <ligand>
        <name>UDP-alpha-D-glucose</name>
        <dbReference type="ChEBI" id="CHEBI:58885"/>
    </ligand>
</feature>
<feature type="binding site" evidence="1">
    <location>
        <position position="377"/>
    </location>
    <ligand>
        <name>UDP-alpha-D-glucose</name>
        <dbReference type="ChEBI" id="CHEBI:58885"/>
    </ligand>
</feature>
<feature type="binding site" evidence="1">
    <location>
        <position position="392"/>
    </location>
    <ligand>
        <name>UDP-alpha-D-glucose</name>
        <dbReference type="ChEBI" id="CHEBI:58885"/>
    </ligand>
</feature>
<feature type="binding site" evidence="1">
    <location>
        <position position="395"/>
    </location>
    <ligand>
        <name>UDP-alpha-D-glucose</name>
        <dbReference type="ChEBI" id="CHEBI:58885"/>
    </ligand>
</feature>
<feature type="binding site" evidence="1">
    <location>
        <position position="396"/>
    </location>
    <ligand>
        <name>UDP-alpha-D-glucose</name>
        <dbReference type="ChEBI" id="CHEBI:58885"/>
    </ligand>
</feature>
<feature type="binding site" evidence="1">
    <location>
        <position position="397"/>
    </location>
    <ligand>
        <name>UDP-alpha-D-glucose</name>
        <dbReference type="ChEBI" id="CHEBI:58885"/>
    </ligand>
</feature>
<feature type="binding site" evidence="1">
    <location>
        <position position="400"/>
    </location>
    <ligand>
        <name>UDP-alpha-D-glucose</name>
        <dbReference type="ChEBI" id="CHEBI:58885"/>
    </ligand>
</feature>
<feature type="binding site" evidence="1">
    <location>
        <position position="416"/>
    </location>
    <ligand>
        <name>UDP-alpha-D-glucose</name>
        <dbReference type="ChEBI" id="CHEBI:58885"/>
    </ligand>
</feature>
<feature type="binding site" evidence="1">
    <location>
        <position position="417"/>
    </location>
    <ligand>
        <name>UDP-alpha-D-glucose</name>
        <dbReference type="ChEBI" id="CHEBI:58885"/>
    </ligand>
</feature>
<sequence length="504" mass="55291">MVGRGKGKGREHVLLVVFPAQGHISPALQLAFKIVAHSSIDLTFLTSSSAVASILIGLPPTAPALNFAAFSQGNLHNDDDDDDDAKDYMHTLCKHGSQSVRDIIHSTKKGQGQGQGQGQGQGQGQGHPITRILYTTLLPWAADVAREFRLPSVLLWTQPVTTFLTFHYYFTGYEDAINKVRNQQGTEDDSTIQLPRLPLLSSRDLHSFMLPSNPFKGAINTFKEHLEALDAEETPPTILVNSYDALEEEALQAMIPKYKTMGIGPLIPSSVFDTRETTCEVVSLVPDLAQKSKDDCQWHGWLNSKAEGSVIYVSFGSHVKQSKAQTEEIAKGLLASGHPFLWVITSNEEEEGDEIMEQNLVEEIQEKGMMIVPWCAQFQVLKHPSVGCFMTHCGWNSTLESIACGVPMIGFPKMFDQPTISKLIAHVWKVGVRVNAAVDGIVGQEVIKNCIESVMDPDGIGRELNENVRKFMSLGKKAAEEGGSSHNNFKAFLQDMTGGTTTIN</sequence>
<organism>
    <name type="scientific">Gentiana triflora</name>
    <name type="common">Clustered gentian</name>
    <dbReference type="NCBI Taxonomy" id="55190"/>
    <lineage>
        <taxon>Eukaryota</taxon>
        <taxon>Viridiplantae</taxon>
        <taxon>Streptophyta</taxon>
        <taxon>Embryophyta</taxon>
        <taxon>Tracheophyta</taxon>
        <taxon>Spermatophyta</taxon>
        <taxon>Magnoliopsida</taxon>
        <taxon>eudicotyledons</taxon>
        <taxon>Gunneridae</taxon>
        <taxon>Pentapetalae</taxon>
        <taxon>asterids</taxon>
        <taxon>lamiids</taxon>
        <taxon>Gentianales</taxon>
        <taxon>Gentianaceae</taxon>
        <taxon>Gentianeae</taxon>
        <taxon>Gentianinae</taxon>
        <taxon>Gentiana</taxon>
    </lineage>
</organism>
<comment type="function">
    <text evidence="4">Catalyzes the glucosylation at the O-5 position of anthocyanidin 3-glucosides to form anthocyanidin 3,5-di-O-glucosides using UDP-glucose as sugar donor. Anthocyanidin 3,5-di-O-glucosides are molecules that are responsible for pigmentation. Involved in biosynsthesis of accumulate gentiodelphin, a unique polyacylated delphinidin-type anthocyanin, in the petals. Also acts on anthocyanidin 3-O-(6-O-malonylglucoside). Much less active with hydroxycinnamoylglucose derivatives. No activity in the absence of the 3-O-glucoside group.</text>
</comment>
<comment type="catalytic activity">
    <reaction evidence="4">
        <text>an anthocyanidin 3-O-beta-D-glucoside + UDP-alpha-D-glucose = an anthocyanidin 3,5-di-O-beta-D-glucoside + UDP + 2 H(+)</text>
        <dbReference type="Rhea" id="RHEA:35423"/>
        <dbReference type="ChEBI" id="CHEBI:15378"/>
        <dbReference type="ChEBI" id="CHEBI:16307"/>
        <dbReference type="ChEBI" id="CHEBI:57503"/>
        <dbReference type="ChEBI" id="CHEBI:58223"/>
        <dbReference type="ChEBI" id="CHEBI:58885"/>
        <dbReference type="EC" id="2.4.1.298"/>
    </reaction>
</comment>
<comment type="biophysicochemical properties">
    <kinetics>
        <KM evidence="4">29.5 mM for delphinidin 3-glucoside</KM>
        <KM evidence="4">20.9 mM for cyanidin 3-glucoside</KM>
        <KM evidence="4">12.2 mM for pelargonidin 3-glucoside</KM>
        <KM evidence="4">3.4 mM for malvidin 3-glucoside</KM>
        <Vmax evidence="4">1.49 nmol/min/mg enzyme with delphinidin 3-glucoside as substrate</Vmax>
        <Vmax evidence="4">0.98 nmol/min/mg enzyme with cyanidin 3-glucoside as substrate</Vmax>
        <Vmax evidence="4">0.68 nmol/min/mg enzyme with pelargonidin 3-glucoside as substrate</Vmax>
        <Vmax evidence="4">0.52 nmol/min/mg enzyme with malvidin 3-glucoside as substrate</Vmax>
    </kinetics>
</comment>
<comment type="pathway">
    <text evidence="4">Pigment biosynthesis; anthocyanin biosynthesis.</text>
</comment>
<comment type="tissue specificity">
    <text evidence="4">Predominantly expressed in petals and weakly in filaments. Not expressed in leaves, stems and other floral organs.</text>
</comment>
<comment type="similarity">
    <text evidence="5">Belongs to the UDP-glycosyltransferase family.</text>
</comment>
<evidence type="ECO:0000250" key="1">
    <source>
        <dbReference type="UniProtKB" id="A0A0A1HA03"/>
    </source>
</evidence>
<evidence type="ECO:0000250" key="2">
    <source>
        <dbReference type="UniProtKB" id="P51094"/>
    </source>
</evidence>
<evidence type="ECO:0000256" key="3">
    <source>
        <dbReference type="SAM" id="MobiDB-lite"/>
    </source>
</evidence>
<evidence type="ECO:0000269" key="4">
    <source>
    </source>
</evidence>
<evidence type="ECO:0000305" key="5"/>
<protein>
    <recommendedName>
        <fullName>Anthocyanidin 3-O-glucoside 5-O-glucosyltransferase</fullName>
        <ecNumber>2.4.1.298</ecNumber>
    </recommendedName>
    <alternativeName>
        <fullName>Anthocyanin 5-O-glucosyltransferase</fullName>
        <shortName>Gt5GT7</shortName>
    </alternativeName>
</protein>
<dbReference type="EC" id="2.4.1.298"/>
<dbReference type="EMBL" id="AB363839">
    <property type="protein sequence ID" value="BAG32255.1"/>
    <property type="molecule type" value="mRNA"/>
</dbReference>
<dbReference type="SMR" id="B2NID7"/>
<dbReference type="CAZy" id="GT1">
    <property type="family name" value="Glycosyltransferase Family 1"/>
</dbReference>
<dbReference type="KEGG" id="ag:BAG32255"/>
<dbReference type="BioCyc" id="MetaCyc:MONOMER-18003"/>
<dbReference type="BRENDA" id="2.4.1.298">
    <property type="organism ID" value="2412"/>
</dbReference>
<dbReference type="UniPathway" id="UPA00009"/>
<dbReference type="GO" id="GO:0016758">
    <property type="term" value="F:hexosyltransferase activity"/>
    <property type="evidence" value="ECO:0000314"/>
    <property type="project" value="UniProtKB"/>
</dbReference>
<dbReference type="GO" id="GO:0080043">
    <property type="term" value="F:quercetin 3-O-glucosyltransferase activity"/>
    <property type="evidence" value="ECO:0007669"/>
    <property type="project" value="TreeGrafter"/>
</dbReference>
<dbReference type="GO" id="GO:0080044">
    <property type="term" value="F:quercetin 7-O-glucosyltransferase activity"/>
    <property type="evidence" value="ECO:0007669"/>
    <property type="project" value="TreeGrafter"/>
</dbReference>
<dbReference type="GO" id="GO:0102816">
    <property type="term" value="F:UDP-D-glucose:delphinidin 3-O-glucosyl-5-O-caffeoylglucoside -O-beta-D-glucosyltransferase activity"/>
    <property type="evidence" value="ECO:0007669"/>
    <property type="project" value="UniProtKB-EC"/>
</dbReference>
<dbReference type="GO" id="GO:0009718">
    <property type="term" value="P:anthocyanin-containing compound biosynthetic process"/>
    <property type="evidence" value="ECO:0000314"/>
    <property type="project" value="UniProtKB"/>
</dbReference>
<dbReference type="GO" id="GO:0043473">
    <property type="term" value="P:pigmentation"/>
    <property type="evidence" value="ECO:0000304"/>
    <property type="project" value="UniProtKB"/>
</dbReference>
<dbReference type="CDD" id="cd03784">
    <property type="entry name" value="GT1_Gtf-like"/>
    <property type="match status" value="1"/>
</dbReference>
<dbReference type="FunFam" id="3.40.50.2000:FF:000078">
    <property type="entry name" value="Glycosyltransferase"/>
    <property type="match status" value="1"/>
</dbReference>
<dbReference type="FunFam" id="3.40.50.2000:FF:000255">
    <property type="entry name" value="Glycosyltransferase"/>
    <property type="match status" value="1"/>
</dbReference>
<dbReference type="Gene3D" id="3.40.50.2000">
    <property type="entry name" value="Glycogen Phosphorylase B"/>
    <property type="match status" value="2"/>
</dbReference>
<dbReference type="InterPro" id="IPR002213">
    <property type="entry name" value="UDP_glucos_trans"/>
</dbReference>
<dbReference type="InterPro" id="IPR035595">
    <property type="entry name" value="UDP_glycos_trans_CS"/>
</dbReference>
<dbReference type="PANTHER" id="PTHR11926">
    <property type="entry name" value="GLUCOSYL/GLUCURONOSYL TRANSFERASES"/>
    <property type="match status" value="1"/>
</dbReference>
<dbReference type="PANTHER" id="PTHR11926:SF870">
    <property type="entry name" value="UDP-GLYCOSYLTRANSFERASE 75B1"/>
    <property type="match status" value="1"/>
</dbReference>
<dbReference type="Pfam" id="PF00201">
    <property type="entry name" value="UDPGT"/>
    <property type="match status" value="1"/>
</dbReference>
<dbReference type="SUPFAM" id="SSF53756">
    <property type="entry name" value="UDP-Glycosyltransferase/glycogen phosphorylase"/>
    <property type="match status" value="1"/>
</dbReference>
<dbReference type="PROSITE" id="PS00375">
    <property type="entry name" value="UDPGT"/>
    <property type="match status" value="1"/>
</dbReference>
<reference key="1">
    <citation type="journal article" date="2008" name="J. Exp. Bot.">
        <title>Cloning and characterization of the UDP-glucose:anthocyanin 5-O-glucosyltransferase gene from blue-flowered gentian.</title>
        <authorList>
            <person name="Nakatsuka T."/>
            <person name="Sato K."/>
            <person name="Takahashi H."/>
            <person name="Yamamura S."/>
            <person name="Nishihara M."/>
        </authorList>
    </citation>
    <scope>NUCLEOTIDE SEQUENCE [MRNA]</scope>
    <scope>FUNCTION</scope>
    <scope>CATALYTIC ACTIVITY</scope>
    <scope>PATHWAY</scope>
    <scope>BIOPHYSICOCHEMICAL PROPERTIES</scope>
    <scope>TISSUE SPECIFICITY</scope>
</reference>